<comment type="function">
    <text evidence="1">Mediates cleavage of dimethylsulfoniopropionate (DMSP) into dimethyl sulfide (DMS) and acrylate. DMS is the principal form by which sulfur is transported from oceans to the atmosphere and is a key component of the ocean sulfur cycle.</text>
</comment>
<comment type="catalytic activity">
    <reaction evidence="1">
        <text>S,S-dimethyl-beta-propiothetin = acrylate + dimethyl sulfide + H(+)</text>
        <dbReference type="Rhea" id="RHEA:19965"/>
        <dbReference type="ChEBI" id="CHEBI:15378"/>
        <dbReference type="ChEBI" id="CHEBI:16457"/>
        <dbReference type="ChEBI" id="CHEBI:17437"/>
        <dbReference type="ChEBI" id="CHEBI:37080"/>
        <dbReference type="EC" id="4.4.1.3"/>
    </reaction>
</comment>
<comment type="subunit">
    <text evidence="1">Homotetramer.</text>
</comment>
<comment type="similarity">
    <text evidence="3">Belongs to the aspartate/glutamate racemases family. ALMA1 subfamily.</text>
</comment>
<sequence length="504" mass="54753">MPAQAVVGTNSYLFRTVHAEVKGLRYLDVRAGKELSVSQKKALKEAVKELDAEGVVAITGDCGSFVHYQTAVRRMTKTPAVLSPLLQAPLLATMYMKEETILVLTNDSSDYDQAALESNLVEIGLSQEDAARFVIQGLQHIEGFSTSEVADMSDERTWAMVDTSERLRLEIMSTIEAAKKANPSLRAILLESTLLPSFSDSMRQTRGVPVFDAITLADYLAAASTDNPRFGSNIDASVWSSAMERANVMDELSQRATPAIGILRIDYSYPPAPGDVDYPGSYYYRTVQEVAAGLTFEAAQEGRPLTAQQREAMEGAIRRLEAAKGVVGITGDCGFLMNYQVDARRMSHLPCFISAMMQCHMLAASFAADEEFLVLTANGKSLAPKFGEMLSLAHVTRPEDQARFHILGCEDVDGFDAVAKGEAVDVARVTPGIVALAKAAAARRPKVRAVLLECTELPPYADALRHALRIPVLDAITLVDFVHSASTDNPAFGVDFQKSSKVFV</sequence>
<organism>
    <name type="scientific">Emiliania huxleyi (strain CCMP1516)</name>
    <dbReference type="NCBI Taxonomy" id="280463"/>
    <lineage>
        <taxon>Eukaryota</taxon>
        <taxon>Haptista</taxon>
        <taxon>Haptophyta</taxon>
        <taxon>Prymnesiophyceae</taxon>
        <taxon>Isochrysidales</taxon>
        <taxon>Noelaerhabdaceae</taxon>
        <taxon>Emiliania</taxon>
    </lineage>
</organism>
<name>ALMA5_EMIH1</name>
<reference key="1">
    <citation type="journal article" date="2013" name="Nature">
        <title>Pan genome of the phytoplankton Emiliania underpins its global distribution.</title>
        <authorList>
            <person name="Read B.A."/>
            <person name="Kegel J."/>
            <person name="Klute M.J."/>
            <person name="Kuo A."/>
            <person name="Lefebvre S.C."/>
            <person name="Maumus F."/>
            <person name="Mayer C."/>
            <person name="Miller J."/>
            <person name="Monier A."/>
            <person name="Salamov A."/>
            <person name="Young J."/>
            <person name="Aguilar M."/>
            <person name="Claverie J.M."/>
            <person name="Frickenhaus S."/>
            <person name="Gonzalez K."/>
            <person name="Herman E.K."/>
            <person name="Lin Y.C."/>
            <person name="Napier J."/>
            <person name="Ogata H."/>
            <person name="Sarno A.F."/>
            <person name="Shmutz J."/>
            <person name="Schroeder D."/>
            <person name="de Vargas C."/>
            <person name="Verret F."/>
            <person name="von Dassow P."/>
            <person name="Valentin K."/>
            <person name="Van de Peer Y."/>
            <person name="Wheeler G."/>
            <person name="Dacks J.B."/>
            <person name="Delwiche C.F."/>
            <person name="Dyhrman S.T."/>
            <person name="Glockner G."/>
            <person name="John U."/>
            <person name="Richards T."/>
            <person name="Worden A.Z."/>
            <person name="Zhang X."/>
            <person name="Grigoriev I.V."/>
            <person name="Allen A.E."/>
            <person name="Bidle K."/>
            <person name="Borodovsky M."/>
            <person name="Bowler C."/>
            <person name="Brownlee C."/>
            <person name="Cock J.M."/>
            <person name="Elias M."/>
            <person name="Gladyshev V.N."/>
            <person name="Groth M."/>
            <person name="Guda C."/>
            <person name="Hadaegh A."/>
            <person name="Iglesias-Rodriguez M.D."/>
            <person name="Jenkins J."/>
            <person name="Jones B.M."/>
            <person name="Lawson T."/>
            <person name="Leese F."/>
            <person name="Lindquist E."/>
            <person name="Lobanov A."/>
            <person name="Lomsadze A."/>
            <person name="Malik S.B."/>
            <person name="Marsh M.E."/>
            <person name="Mackinder L."/>
            <person name="Mock T."/>
            <person name="Mueller-Roeber B."/>
            <person name="Pagarete A."/>
            <person name="Parker M."/>
            <person name="Probert I."/>
            <person name="Quesneville H."/>
            <person name="Raines C."/>
            <person name="Rensing S.A."/>
            <person name="Riano-Pachon D.M."/>
            <person name="Richier S."/>
            <person name="Rokitta S."/>
            <person name="Shiraiwa Y."/>
            <person name="Soanes D.M."/>
            <person name="van der Giezen M."/>
            <person name="Wahlund T.M."/>
            <person name="Williams B."/>
            <person name="Wilson W."/>
            <person name="Wolfe G."/>
            <person name="Wurch L.L."/>
        </authorList>
    </citation>
    <scope>NUCLEOTIDE SEQUENCE [LARGE SCALE GENOMIC DNA]</scope>
    <source>
        <strain>CCMP1516</strain>
    </source>
</reference>
<reference key="2">
    <citation type="journal article" date="2015" name="Science">
        <title>Identification of the algal dimethyl sulfide-releasing enzyme: A missing link in the marine sulfur cycle.</title>
        <authorList>
            <person name="Alcolombri U."/>
            <person name="Ben-Dor S."/>
            <person name="Feldmesser E."/>
            <person name="Levin Y."/>
            <person name="Tawfik D.S."/>
            <person name="Vardi A."/>
        </authorList>
    </citation>
    <scope>IDENTIFICATION</scope>
</reference>
<dbReference type="EC" id="4.4.1.3" evidence="1"/>
<dbReference type="EMBL" id="KB865438">
    <property type="protein sequence ID" value="EOD24466.1"/>
    <property type="molecule type" value="Genomic_DNA"/>
</dbReference>
<dbReference type="RefSeq" id="XP_005776895.1">
    <property type="nucleotide sequence ID" value="XM_005776838.1"/>
</dbReference>
<dbReference type="SMR" id="R1ENF4"/>
<dbReference type="PaxDb" id="2903-EOD24466"/>
<dbReference type="EnsemblProtists" id="EOD24466">
    <property type="protein sequence ID" value="EOD24466"/>
    <property type="gene ID" value="EMIHUDRAFT_115912"/>
</dbReference>
<dbReference type="GeneID" id="17270012"/>
<dbReference type="KEGG" id="ehx:EMIHUDRAFT_115912"/>
<dbReference type="eggNOG" id="ENOG502RZWQ">
    <property type="taxonomic scope" value="Eukaryota"/>
</dbReference>
<dbReference type="HOGENOM" id="CLU_567962_0_0_1"/>
<dbReference type="Proteomes" id="UP000013827">
    <property type="component" value="Unassembled WGS sequence"/>
</dbReference>
<dbReference type="GO" id="GO:0047869">
    <property type="term" value="F:dimethylpropiothetin dethiomethylase activity"/>
    <property type="evidence" value="ECO:0007669"/>
    <property type="project" value="UniProtKB-EC"/>
</dbReference>
<dbReference type="GO" id="GO:0016855">
    <property type="term" value="F:racemase and epimerase activity, acting on amino acids and derivatives"/>
    <property type="evidence" value="ECO:0007669"/>
    <property type="project" value="InterPro"/>
</dbReference>
<dbReference type="Gene3D" id="3.40.50.1860">
    <property type="match status" value="1"/>
</dbReference>
<dbReference type="InterPro" id="IPR001920">
    <property type="entry name" value="Asp/Glu_race"/>
</dbReference>
<evidence type="ECO:0000250" key="1">
    <source>
        <dbReference type="UniProtKB" id="P0DN21"/>
    </source>
</evidence>
<evidence type="ECO:0000303" key="2">
    <source>
    </source>
</evidence>
<evidence type="ECO:0000305" key="3"/>
<evidence type="ECO:0000312" key="4">
    <source>
        <dbReference type="EMBL" id="EOD24466.1"/>
    </source>
</evidence>
<protein>
    <recommendedName>
        <fullName evidence="3">Dimethylsulfoniopropionate lyase 5</fullName>
        <shortName evidence="3">DMSP lyase 5</shortName>
        <ecNumber evidence="1">4.4.1.3</ecNumber>
    </recommendedName>
    <alternativeName>
        <fullName evidence="3">Dimethylpropiothetin dethiomethylase 5</fullName>
    </alternativeName>
</protein>
<accession>R1ENF4</accession>
<proteinExistence type="inferred from homology"/>
<gene>
    <name evidence="2" type="primary">ALMA5</name>
    <name evidence="4" type="ORF">EMIHUDRAFT_115912</name>
</gene>
<feature type="chain" id="PRO_0000433892" description="Dimethylsulfoniopropionate lyase 5">
    <location>
        <begin position="1"/>
        <end position="504"/>
    </location>
</feature>
<keyword id="KW-0456">Lyase</keyword>
<keyword id="KW-1185">Reference proteome</keyword>